<evidence type="ECO:0000255" key="1">
    <source>
        <dbReference type="HAMAP-Rule" id="MF_00344"/>
    </source>
</evidence>
<proteinExistence type="inferred from homology"/>
<name>GUAA_STRZT</name>
<sequence>MSNISTDLQDVEKIIVLDYGSQYNQLISRRIREIGVFSELKSHKISAAEVREVNPVGIILSGGPNSVYEDGSFDIDPEIFELGIPILGICYGMQLLTHKLGGKVVPAGDAGNREYGQSTLTHTPSALFESTPDEQTVLMSHGDAVTEIPADFVRTGTSADCPYAAIENPDKHIYGIQFHPEVRHSVYGNDILRNFALNICKAKGDWSMDNFIDMQIKKIRETVGDKRVLLGLSGGVDSSVVGVLLQKAIGDQLICIFVDHGLLRKGEADQVMDMLGGKFGLNIVKADAAKRFLDKLAGVSDPEQKRKIIGNEFVYVFDDEASKLKDVKFLAQGTLYTDVIESGTDTAQTIKSHHNVGGLPEDMQFELIEPLNTLYKDEVRALGTELGMPDHIVWRQPFPGPGLAIRVMGEITEEKLETVRESDAILREEIAKAGLDRDIWQYFTVNTGVRSVGVMGDGRTYDYTIAIRAITSIDGMTADFAKIPWEVLQKISVRIVNEVDHVNRIVYDITSKPPATVEWE</sequence>
<keyword id="KW-0067">ATP-binding</keyword>
<keyword id="KW-0315">Glutamine amidotransferase</keyword>
<keyword id="KW-0332">GMP biosynthesis</keyword>
<keyword id="KW-0436">Ligase</keyword>
<keyword id="KW-0547">Nucleotide-binding</keyword>
<keyword id="KW-0658">Purine biosynthesis</keyword>
<organism>
    <name type="scientific">Streptococcus pneumoniae (strain Taiwan19F-14)</name>
    <dbReference type="NCBI Taxonomy" id="487213"/>
    <lineage>
        <taxon>Bacteria</taxon>
        <taxon>Bacillati</taxon>
        <taxon>Bacillota</taxon>
        <taxon>Bacilli</taxon>
        <taxon>Lactobacillales</taxon>
        <taxon>Streptococcaceae</taxon>
        <taxon>Streptococcus</taxon>
    </lineage>
</organism>
<comment type="function">
    <text evidence="1">Catalyzes the synthesis of GMP from XMP.</text>
</comment>
<comment type="catalytic activity">
    <reaction evidence="1">
        <text>XMP + L-glutamine + ATP + H2O = GMP + L-glutamate + AMP + diphosphate + 2 H(+)</text>
        <dbReference type="Rhea" id="RHEA:11680"/>
        <dbReference type="ChEBI" id="CHEBI:15377"/>
        <dbReference type="ChEBI" id="CHEBI:15378"/>
        <dbReference type="ChEBI" id="CHEBI:29985"/>
        <dbReference type="ChEBI" id="CHEBI:30616"/>
        <dbReference type="ChEBI" id="CHEBI:33019"/>
        <dbReference type="ChEBI" id="CHEBI:57464"/>
        <dbReference type="ChEBI" id="CHEBI:58115"/>
        <dbReference type="ChEBI" id="CHEBI:58359"/>
        <dbReference type="ChEBI" id="CHEBI:456215"/>
        <dbReference type="EC" id="6.3.5.2"/>
    </reaction>
</comment>
<comment type="pathway">
    <text evidence="1">Purine metabolism; GMP biosynthesis; GMP from XMP (L-Gln route): step 1/1.</text>
</comment>
<comment type="subunit">
    <text evidence="1">Homodimer.</text>
</comment>
<protein>
    <recommendedName>
        <fullName evidence="1">GMP synthase [glutamine-hydrolyzing]</fullName>
        <ecNumber evidence="1">6.3.5.2</ecNumber>
    </recommendedName>
    <alternativeName>
        <fullName evidence="1">GMP synthetase</fullName>
    </alternativeName>
    <alternativeName>
        <fullName evidence="1">Glutamine amidotransferase</fullName>
    </alternativeName>
</protein>
<gene>
    <name evidence="1" type="primary">guaA</name>
    <name type="ordered locus">SPT_0829</name>
</gene>
<feature type="chain" id="PRO_1000133388" description="GMP synthase [glutamine-hydrolyzing]">
    <location>
        <begin position="1"/>
        <end position="520"/>
    </location>
</feature>
<feature type="domain" description="Glutamine amidotransferase type-1" evidence="1">
    <location>
        <begin position="13"/>
        <end position="205"/>
    </location>
</feature>
<feature type="domain" description="GMPS ATP-PPase" evidence="1">
    <location>
        <begin position="206"/>
        <end position="395"/>
    </location>
</feature>
<feature type="active site" description="Nucleophile" evidence="1">
    <location>
        <position position="90"/>
    </location>
</feature>
<feature type="active site" evidence="1">
    <location>
        <position position="179"/>
    </location>
</feature>
<feature type="active site" evidence="1">
    <location>
        <position position="181"/>
    </location>
</feature>
<feature type="binding site" evidence="1">
    <location>
        <begin position="233"/>
        <end position="239"/>
    </location>
    <ligand>
        <name>ATP</name>
        <dbReference type="ChEBI" id="CHEBI:30616"/>
    </ligand>
</feature>
<reference key="1">
    <citation type="journal article" date="2010" name="Genome Biol.">
        <title>Structure and dynamics of the pan-genome of Streptococcus pneumoniae and closely related species.</title>
        <authorList>
            <person name="Donati C."/>
            <person name="Hiller N.L."/>
            <person name="Tettelin H."/>
            <person name="Muzzi A."/>
            <person name="Croucher N.J."/>
            <person name="Angiuoli S.V."/>
            <person name="Oggioni M."/>
            <person name="Dunning Hotopp J.C."/>
            <person name="Hu F.Z."/>
            <person name="Riley D.R."/>
            <person name="Covacci A."/>
            <person name="Mitchell T.J."/>
            <person name="Bentley S.D."/>
            <person name="Kilian M."/>
            <person name="Ehrlich G.D."/>
            <person name="Rappuoli R."/>
            <person name="Moxon E.R."/>
            <person name="Masignani V."/>
        </authorList>
    </citation>
    <scope>NUCLEOTIDE SEQUENCE [LARGE SCALE GENOMIC DNA]</scope>
    <source>
        <strain>Taiwan19F-14</strain>
    </source>
</reference>
<accession>C1CQS0</accession>
<dbReference type="EC" id="6.3.5.2" evidence="1"/>
<dbReference type="EMBL" id="CP000921">
    <property type="protein sequence ID" value="ACO23001.1"/>
    <property type="molecule type" value="Genomic_DNA"/>
</dbReference>
<dbReference type="RefSeq" id="WP_000065723.1">
    <property type="nucleotide sequence ID" value="NC_012469.1"/>
</dbReference>
<dbReference type="SMR" id="C1CQS0"/>
<dbReference type="MEROPS" id="C26.957"/>
<dbReference type="GeneID" id="45653302"/>
<dbReference type="KEGG" id="snt:SPT_0829"/>
<dbReference type="HOGENOM" id="CLU_014340_0_5_9"/>
<dbReference type="UniPathway" id="UPA00189">
    <property type="reaction ID" value="UER00296"/>
</dbReference>
<dbReference type="GO" id="GO:0005829">
    <property type="term" value="C:cytosol"/>
    <property type="evidence" value="ECO:0007669"/>
    <property type="project" value="TreeGrafter"/>
</dbReference>
<dbReference type="GO" id="GO:0005524">
    <property type="term" value="F:ATP binding"/>
    <property type="evidence" value="ECO:0007669"/>
    <property type="project" value="UniProtKB-UniRule"/>
</dbReference>
<dbReference type="GO" id="GO:0003921">
    <property type="term" value="F:GMP synthase activity"/>
    <property type="evidence" value="ECO:0007669"/>
    <property type="project" value="InterPro"/>
</dbReference>
<dbReference type="CDD" id="cd01742">
    <property type="entry name" value="GATase1_GMP_Synthase"/>
    <property type="match status" value="1"/>
</dbReference>
<dbReference type="CDD" id="cd01997">
    <property type="entry name" value="GMP_synthase_C"/>
    <property type="match status" value="1"/>
</dbReference>
<dbReference type="FunFam" id="3.30.300.10:FF:000002">
    <property type="entry name" value="GMP synthase [glutamine-hydrolyzing]"/>
    <property type="match status" value="1"/>
</dbReference>
<dbReference type="FunFam" id="3.40.50.620:FF:000001">
    <property type="entry name" value="GMP synthase [glutamine-hydrolyzing]"/>
    <property type="match status" value="1"/>
</dbReference>
<dbReference type="FunFam" id="3.40.50.880:FF:000001">
    <property type="entry name" value="GMP synthase [glutamine-hydrolyzing]"/>
    <property type="match status" value="1"/>
</dbReference>
<dbReference type="Gene3D" id="3.30.300.10">
    <property type="match status" value="1"/>
</dbReference>
<dbReference type="Gene3D" id="3.40.50.880">
    <property type="match status" value="1"/>
</dbReference>
<dbReference type="Gene3D" id="3.40.50.620">
    <property type="entry name" value="HUPs"/>
    <property type="match status" value="1"/>
</dbReference>
<dbReference type="HAMAP" id="MF_00344">
    <property type="entry name" value="GMP_synthase"/>
    <property type="match status" value="1"/>
</dbReference>
<dbReference type="InterPro" id="IPR029062">
    <property type="entry name" value="Class_I_gatase-like"/>
</dbReference>
<dbReference type="InterPro" id="IPR017926">
    <property type="entry name" value="GATASE"/>
</dbReference>
<dbReference type="InterPro" id="IPR001674">
    <property type="entry name" value="GMP_synth_C"/>
</dbReference>
<dbReference type="InterPro" id="IPR004739">
    <property type="entry name" value="GMP_synth_GATase"/>
</dbReference>
<dbReference type="InterPro" id="IPR022955">
    <property type="entry name" value="GMP_synthase"/>
</dbReference>
<dbReference type="InterPro" id="IPR025777">
    <property type="entry name" value="GMPS_ATP_PPase_dom"/>
</dbReference>
<dbReference type="InterPro" id="IPR022310">
    <property type="entry name" value="NAD/GMP_synthase"/>
</dbReference>
<dbReference type="InterPro" id="IPR014729">
    <property type="entry name" value="Rossmann-like_a/b/a_fold"/>
</dbReference>
<dbReference type="NCBIfam" id="TIGR00884">
    <property type="entry name" value="guaA_Cterm"/>
    <property type="match status" value="1"/>
</dbReference>
<dbReference type="NCBIfam" id="TIGR00888">
    <property type="entry name" value="guaA_Nterm"/>
    <property type="match status" value="1"/>
</dbReference>
<dbReference type="NCBIfam" id="NF000848">
    <property type="entry name" value="PRK00074.1"/>
    <property type="match status" value="1"/>
</dbReference>
<dbReference type="PANTHER" id="PTHR11922:SF2">
    <property type="entry name" value="GMP SYNTHASE [GLUTAMINE-HYDROLYZING]"/>
    <property type="match status" value="1"/>
</dbReference>
<dbReference type="PANTHER" id="PTHR11922">
    <property type="entry name" value="GMP SYNTHASE-RELATED"/>
    <property type="match status" value="1"/>
</dbReference>
<dbReference type="Pfam" id="PF00117">
    <property type="entry name" value="GATase"/>
    <property type="match status" value="1"/>
</dbReference>
<dbReference type="Pfam" id="PF00958">
    <property type="entry name" value="GMP_synt_C"/>
    <property type="match status" value="1"/>
</dbReference>
<dbReference type="Pfam" id="PF02540">
    <property type="entry name" value="NAD_synthase"/>
    <property type="match status" value="1"/>
</dbReference>
<dbReference type="PRINTS" id="PR00097">
    <property type="entry name" value="ANTSNTHASEII"/>
</dbReference>
<dbReference type="PRINTS" id="PR00099">
    <property type="entry name" value="CPSGATASE"/>
</dbReference>
<dbReference type="PRINTS" id="PR00096">
    <property type="entry name" value="GATASE"/>
</dbReference>
<dbReference type="SUPFAM" id="SSF52402">
    <property type="entry name" value="Adenine nucleotide alpha hydrolases-like"/>
    <property type="match status" value="1"/>
</dbReference>
<dbReference type="SUPFAM" id="SSF52317">
    <property type="entry name" value="Class I glutamine amidotransferase-like"/>
    <property type="match status" value="1"/>
</dbReference>
<dbReference type="PROSITE" id="PS51273">
    <property type="entry name" value="GATASE_TYPE_1"/>
    <property type="match status" value="1"/>
</dbReference>
<dbReference type="PROSITE" id="PS51553">
    <property type="entry name" value="GMPS_ATP_PPASE"/>
    <property type="match status" value="1"/>
</dbReference>